<keyword id="KW-0007">Acetylation</keyword>
<keyword id="KW-0012">Acyltransferase</keyword>
<keyword id="KW-0963">Cytoplasm</keyword>
<keyword id="KW-1185">Reference proteome</keyword>
<keyword id="KW-0808">Transferase</keyword>
<accession>P77567</accession>
<gene>
    <name type="primary">nhoA</name>
    <name type="synonym">yddI</name>
    <name type="ordered locus">b1463</name>
    <name type="ordered locus">JW1458</name>
</gene>
<dbReference type="EC" id="2.3.1.5" evidence="2"/>
<dbReference type="EC" id="2.3.1.118" evidence="1"/>
<dbReference type="EMBL" id="U00096">
    <property type="protein sequence ID" value="AAC74545.1"/>
    <property type="molecule type" value="Genomic_DNA"/>
</dbReference>
<dbReference type="EMBL" id="AP009048">
    <property type="protein sequence ID" value="BAA15100.1"/>
    <property type="molecule type" value="Genomic_DNA"/>
</dbReference>
<dbReference type="PIR" id="B64899">
    <property type="entry name" value="B64899"/>
</dbReference>
<dbReference type="RefSeq" id="NP_415980.1">
    <property type="nucleotide sequence ID" value="NC_000913.3"/>
</dbReference>
<dbReference type="RefSeq" id="WP_000187925.1">
    <property type="nucleotide sequence ID" value="NZ_LN832404.1"/>
</dbReference>
<dbReference type="SMR" id="P77567"/>
<dbReference type="BioGRID" id="4262892">
    <property type="interactions" value="31"/>
</dbReference>
<dbReference type="FunCoup" id="P77567">
    <property type="interactions" value="177"/>
</dbReference>
<dbReference type="IntAct" id="P77567">
    <property type="interactions" value="7"/>
</dbReference>
<dbReference type="STRING" id="511145.b1463"/>
<dbReference type="iPTMnet" id="P77567"/>
<dbReference type="PaxDb" id="511145-b1463"/>
<dbReference type="EnsemblBacteria" id="AAC74545">
    <property type="protein sequence ID" value="AAC74545"/>
    <property type="gene ID" value="b1463"/>
</dbReference>
<dbReference type="GeneID" id="947251"/>
<dbReference type="KEGG" id="ecj:JW1458"/>
<dbReference type="KEGG" id="eco:b1463"/>
<dbReference type="KEGG" id="ecoc:C3026_08495"/>
<dbReference type="PATRIC" id="fig|1411691.4.peg.805"/>
<dbReference type="EchoBASE" id="EB3542"/>
<dbReference type="eggNOG" id="COG2162">
    <property type="taxonomic scope" value="Bacteria"/>
</dbReference>
<dbReference type="HOGENOM" id="CLU_049918_1_1_6"/>
<dbReference type="InParanoid" id="P77567"/>
<dbReference type="OMA" id="CYEHNTL"/>
<dbReference type="OrthoDB" id="7181050at2"/>
<dbReference type="PhylomeDB" id="P77567"/>
<dbReference type="BioCyc" id="EcoCyc:G6770-MONOMER"/>
<dbReference type="BioCyc" id="MetaCyc:G6770-MONOMER"/>
<dbReference type="SABIO-RK" id="P77567"/>
<dbReference type="PRO" id="PR:P77567"/>
<dbReference type="Proteomes" id="UP000000625">
    <property type="component" value="Chromosome"/>
</dbReference>
<dbReference type="GO" id="GO:0005737">
    <property type="term" value="C:cytoplasm"/>
    <property type="evidence" value="ECO:0007669"/>
    <property type="project" value="UniProtKB-SubCell"/>
</dbReference>
<dbReference type="GO" id="GO:0004060">
    <property type="term" value="F:arylamine N-acetyltransferase activity"/>
    <property type="evidence" value="ECO:0000314"/>
    <property type="project" value="EcoCyc"/>
</dbReference>
<dbReference type="GO" id="GO:0046990">
    <property type="term" value="F:N-hydroxyarylamine O-acetyltransferase activity"/>
    <property type="evidence" value="ECO:0000315"/>
    <property type="project" value="EcoCyc"/>
</dbReference>
<dbReference type="GO" id="GO:0042803">
    <property type="term" value="F:protein homodimerization activity"/>
    <property type="evidence" value="ECO:0000314"/>
    <property type="project" value="EcoCyc"/>
</dbReference>
<dbReference type="FunFam" id="2.40.128.150:FF:000001">
    <property type="entry name" value="N-hydroxyarylamine O-acetyltransferase NhoA"/>
    <property type="match status" value="1"/>
</dbReference>
<dbReference type="Gene3D" id="3.30.1120.150">
    <property type="match status" value="1"/>
</dbReference>
<dbReference type="Gene3D" id="6.10.140.1930">
    <property type="match status" value="1"/>
</dbReference>
<dbReference type="Gene3D" id="2.40.128.150">
    <property type="entry name" value="Cysteine proteinases"/>
    <property type="match status" value="1"/>
</dbReference>
<dbReference type="InterPro" id="IPR001447">
    <property type="entry name" value="Arylamine_N-AcTrfase"/>
</dbReference>
<dbReference type="InterPro" id="IPR038765">
    <property type="entry name" value="Papain-like_cys_pep_sf"/>
</dbReference>
<dbReference type="NCBIfam" id="NF011621">
    <property type="entry name" value="PRK15047.1"/>
    <property type="match status" value="1"/>
</dbReference>
<dbReference type="PANTHER" id="PTHR11786:SF0">
    <property type="entry name" value="ARYLAMINE N-ACETYLTRANSFERASE 4-RELATED"/>
    <property type="match status" value="1"/>
</dbReference>
<dbReference type="PANTHER" id="PTHR11786">
    <property type="entry name" value="N-HYDROXYARYLAMINE O-ACETYLTRANSFERASE"/>
    <property type="match status" value="1"/>
</dbReference>
<dbReference type="Pfam" id="PF00797">
    <property type="entry name" value="Acetyltransf_2"/>
    <property type="match status" value="1"/>
</dbReference>
<dbReference type="PRINTS" id="PR01543">
    <property type="entry name" value="ANATRNSFRASE"/>
</dbReference>
<dbReference type="SUPFAM" id="SSF54001">
    <property type="entry name" value="Cysteine proteinases"/>
    <property type="match status" value="1"/>
</dbReference>
<name>NHOA_ECOLI</name>
<comment type="function">
    <text evidence="2 4 7 8">Catalyzes the acetyl-CoA-dependent N-acetylation of aromatic amines, and, probably, the O-acetylation of N-hydroxyarylamines. In vitro, catalyzes the N-acetylation of various arylamines such as aminobenzoic acid, aminophenol, aminotoluene, phenetidine, anisidine, aniline, isoniazid and 2-amino-fluorene (PubMed:10806332, PubMed:23452042). N-hydroxyarylamine O-acetyltransferase activity has not been assayed directly, however, NhoA activity is required for the mutagenicity of nitroaromatic compounds, suggesting that it also has O-acetyltransferase activity (Probable).</text>
</comment>
<comment type="catalytic activity">
    <reaction evidence="2 4">
        <text>an arylamine + acetyl-CoA = an N-acetylarylamine + CoA</text>
        <dbReference type="Rhea" id="RHEA:16613"/>
        <dbReference type="ChEBI" id="CHEBI:13790"/>
        <dbReference type="ChEBI" id="CHEBI:50471"/>
        <dbReference type="ChEBI" id="CHEBI:57287"/>
        <dbReference type="ChEBI" id="CHEBI:57288"/>
        <dbReference type="EC" id="2.3.1.5"/>
    </reaction>
</comment>
<comment type="catalytic activity">
    <reaction evidence="1">
        <text>an N-hydroxyarylamine + acetyl-CoA = an N-acetoxyarylamine + CoA</text>
        <dbReference type="Rhea" id="RHEA:20277"/>
        <dbReference type="ChEBI" id="CHEBI:13792"/>
        <dbReference type="ChEBI" id="CHEBI:21494"/>
        <dbReference type="ChEBI" id="CHEBI:57287"/>
        <dbReference type="ChEBI" id="CHEBI:57288"/>
        <dbReference type="EC" id="2.3.1.118"/>
    </reaction>
</comment>
<comment type="activity regulation">
    <text evidence="2">Inhibited by salicylic acid, acetylsalicylic acid, 2,6-dichrolo-4-nitrophenol, N-ethylmaleimide and iodoacetamide.</text>
</comment>
<comment type="biophysicochemical properties">
    <kinetics>
        <KM evidence="2">0.55 mM for aniline</KM>
        <KM evidence="2">0.41 mM for o-anisidine</KM>
        <KM evidence="2">0.83 mM for p-anisidine</KM>
        <KM evidence="2">0.48 mM for o-aminobenzoic acid</KM>
        <KM evidence="2">0.36 mM for p-aminobenzoic acid</KM>
        <KM evidence="2">1.94 mM for o-aminophenol</KM>
        <KM evidence="2">1.71 mM for m-aminophenol</KM>
        <KM evidence="2">0.54 mM for p-aminophenol</KM>
        <KM evidence="2">0.63 mM for p-aminotoluene</KM>
        <KM evidence="2">0.89 mM for p-phenetidine</KM>
        <KM evidence="2">0.59 mM for isoniazid</KM>
        <Vmax evidence="2">0.09 umol/min/mg enzyme with aniline as substrate</Vmax>
        <Vmax evidence="2">0.1 umol/min/mg enzyme with o-anisidine as substrate</Vmax>
        <Vmax evidence="2">0.47 umol/min/mg enzyme with p-anisidine as substrate</Vmax>
        <Vmax evidence="2">0.3 umol/min/mg enzyme with o-aminobenzoic acid as substrate</Vmax>
        <Vmax evidence="2">0.06 umol/min/mg enzyme with p-aminobenzoic acid as substrate</Vmax>
        <Vmax evidence="2">0.67 umol/min/mg enzyme with o-aminophenol as substrate</Vmax>
        <Vmax evidence="2">0.28 umol/min/mg enzyme with m-aminophenol as substrate</Vmax>
        <Vmax evidence="2">0.33 umol/min/mg enzyme with p-aminophenol as substrate</Vmax>
        <Vmax evidence="2">0.25 umol/min/mg enzyme with p-aminotoluene as substrate</Vmax>
        <Vmax evidence="2">0.5 umol/min/mg enzyme with p-phenetidine as substrate</Vmax>
        <Vmax evidence="2">0.17 umol/min/mg enzyme with isoniazid as substrate</Vmax>
    </kinetics>
    <phDependence>
        <text evidence="2">Optimum pH is 7.4.</text>
    </phDependence>
    <temperatureDependence>
        <text evidence="2">Optimum temperature is 37 degrees Celsius.</text>
    </temperatureDependence>
</comment>
<comment type="subunit">
    <text evidence="2">Homodimer.</text>
</comment>
<comment type="subcellular location">
    <subcellularLocation>
        <location evidence="1">Cytoplasm</location>
    </subcellularLocation>
</comment>
<comment type="PTM">
    <text evidence="4">Acetylated on Lys-214 and Lys-281. Deacetylated by CobB.</text>
</comment>
<comment type="disruption phenotype">
    <text evidence="3">Deletion mutants show marked resistance to nitro compound mutagenicity.</text>
</comment>
<comment type="similarity">
    <text evidence="6">Belongs to the arylamine N-acetyltransferase family.</text>
</comment>
<protein>
    <recommendedName>
        <fullName evidence="6">Arylamine N-acetyltransferase</fullName>
        <ecNumber evidence="2">2.3.1.5</ecNumber>
    </recommendedName>
    <alternativeName>
        <fullName evidence="6">Arylhydroxamate N,O-acetyltransferase</fullName>
    </alternativeName>
    <alternativeName>
        <fullName evidence="5">N-hydroxyarylamine O-acetyltransferase</fullName>
        <ecNumber evidence="1">2.3.1.118</ecNumber>
    </alternativeName>
</protein>
<evidence type="ECO:0000250" key="1">
    <source>
        <dbReference type="UniProtKB" id="Q00267"/>
    </source>
</evidence>
<evidence type="ECO:0000269" key="2">
    <source>
    </source>
</evidence>
<evidence type="ECO:0000269" key="3">
    <source>
    </source>
</evidence>
<evidence type="ECO:0000269" key="4">
    <source>
    </source>
</evidence>
<evidence type="ECO:0000303" key="5">
    <source>
    </source>
</evidence>
<evidence type="ECO:0000305" key="6"/>
<evidence type="ECO:0000305" key="7">
    <source>
    </source>
</evidence>
<evidence type="ECO:0000305" key="8">
    <source>
    </source>
</evidence>
<organism>
    <name type="scientific">Escherichia coli (strain K12)</name>
    <dbReference type="NCBI Taxonomy" id="83333"/>
    <lineage>
        <taxon>Bacteria</taxon>
        <taxon>Pseudomonadati</taxon>
        <taxon>Pseudomonadota</taxon>
        <taxon>Gammaproteobacteria</taxon>
        <taxon>Enterobacterales</taxon>
        <taxon>Enterobacteriaceae</taxon>
        <taxon>Escherichia</taxon>
    </lineage>
</organism>
<reference key="1">
    <citation type="journal article" date="1996" name="DNA Res.">
        <title>A 570-kb DNA sequence of the Escherichia coli K-12 genome corresponding to the 28.0-40.1 min region on the linkage map.</title>
        <authorList>
            <person name="Aiba H."/>
            <person name="Baba T."/>
            <person name="Fujita K."/>
            <person name="Hayashi K."/>
            <person name="Inada T."/>
            <person name="Isono K."/>
            <person name="Itoh T."/>
            <person name="Kasai H."/>
            <person name="Kashimoto K."/>
            <person name="Kimura S."/>
            <person name="Kitakawa M."/>
            <person name="Kitagawa M."/>
            <person name="Makino K."/>
            <person name="Miki T."/>
            <person name="Mizobuchi K."/>
            <person name="Mori H."/>
            <person name="Mori T."/>
            <person name="Motomura K."/>
            <person name="Nakade S."/>
            <person name="Nakamura Y."/>
            <person name="Nashimoto H."/>
            <person name="Nishio Y."/>
            <person name="Oshima T."/>
            <person name="Saito N."/>
            <person name="Sampei G."/>
            <person name="Seki Y."/>
            <person name="Sivasundaram S."/>
            <person name="Tagami H."/>
            <person name="Takeda J."/>
            <person name="Takemoto K."/>
            <person name="Takeuchi Y."/>
            <person name="Wada C."/>
            <person name="Yamamoto Y."/>
            <person name="Horiuchi T."/>
        </authorList>
    </citation>
    <scope>NUCLEOTIDE SEQUENCE [LARGE SCALE GENOMIC DNA]</scope>
    <source>
        <strain>K12 / W3110 / ATCC 27325 / DSM 5911</strain>
    </source>
</reference>
<reference key="2">
    <citation type="journal article" date="1997" name="Science">
        <title>The complete genome sequence of Escherichia coli K-12.</title>
        <authorList>
            <person name="Blattner F.R."/>
            <person name="Plunkett G. III"/>
            <person name="Bloch C.A."/>
            <person name="Perna N.T."/>
            <person name="Burland V."/>
            <person name="Riley M."/>
            <person name="Collado-Vides J."/>
            <person name="Glasner J.D."/>
            <person name="Rode C.K."/>
            <person name="Mayhew G.F."/>
            <person name="Gregor J."/>
            <person name="Davis N.W."/>
            <person name="Kirkpatrick H.A."/>
            <person name="Goeden M.A."/>
            <person name="Rose D.J."/>
            <person name="Mau B."/>
            <person name="Shao Y."/>
        </authorList>
    </citation>
    <scope>NUCLEOTIDE SEQUENCE [LARGE SCALE GENOMIC DNA]</scope>
    <source>
        <strain>K12 / MG1655 / ATCC 47076</strain>
    </source>
</reference>
<reference key="3">
    <citation type="journal article" date="2006" name="Mol. Syst. Biol.">
        <title>Highly accurate genome sequences of Escherichia coli K-12 strains MG1655 and W3110.</title>
        <authorList>
            <person name="Hayashi K."/>
            <person name="Morooka N."/>
            <person name="Yamamoto Y."/>
            <person name="Fujita K."/>
            <person name="Isono K."/>
            <person name="Choi S."/>
            <person name="Ohtsubo E."/>
            <person name="Baba T."/>
            <person name="Wanner B.L."/>
            <person name="Mori H."/>
            <person name="Horiuchi T."/>
        </authorList>
    </citation>
    <scope>NUCLEOTIDE SEQUENCE [LARGE SCALE GENOMIC DNA]</scope>
    <source>
        <strain>K12 / W3110 / ATCC 27325 / DSM 5911</strain>
    </source>
</reference>
<reference key="4">
    <citation type="journal article" date="2000" name="Biochim. Biophys. Acta">
        <title>Purification and biochemical properties of an N-hydroxyarylamine O-acetyltransferase from Escherichia coli.</title>
        <authorList>
            <person name="Yamamura E."/>
            <person name="Sayama M."/>
            <person name="Kakikawa M."/>
            <person name="Mori M."/>
            <person name="Taketo A."/>
            <person name="Kodaira K."/>
        </authorList>
    </citation>
    <scope>FUNCTION AS A N-ACETYLTRANSFERASE</scope>
    <scope>CATALYTIC ACTIVITY</scope>
    <scope>ACTIVITY REGULATION</scope>
    <scope>BIOPHYSICOCHEMICAL PROPERTIES</scope>
    <scope>SUBUNIT</scope>
</reference>
<reference key="5">
    <citation type="journal article" date="2002" name="Biol. Chem.">
        <title>N-hydroxyarylamine O-acetyltransferase-deficient Escherichia coli strains are resistant to the mutagenicity of nitro compounds.</title>
        <authorList>
            <person name="Josephy P.D."/>
            <person name="Summerscales J."/>
            <person name="DeBruin L.S."/>
            <person name="Schlaeger C."/>
            <person name="Ho J."/>
        </authorList>
    </citation>
    <scope>DISRUPTION PHENOTYPE</scope>
    <scope>FUNCTION</scope>
</reference>
<reference key="6">
    <citation type="journal article" date="2013" name="FEBS J.">
        <title>Reversibly acetylated lysine residues play important roles in the enzymatic activity of Escherichia coli N-hydroxyarylamine O-acetyltransferase.</title>
        <authorList>
            <person name="Zhang Q.F."/>
            <person name="Zhang Q."/>
            <person name="Gu J."/>
            <person name="Gong P."/>
            <person name="Wang X.D."/>
            <person name="Wang X."/>
            <person name="Tu S."/>
            <person name="Bi L.J."/>
            <person name="Bi L."/>
            <person name="Yu Z.N."/>
            <person name="Yu Z."/>
            <person name="Zhang Z.P."/>
            <person name="Zhang Z."/>
            <person name="Cui Z.Q."/>
            <person name="Cui Z."/>
            <person name="Wei H.P."/>
            <person name="Wei H."/>
            <person name="Tao S.C."/>
            <person name="Tao S."/>
            <person name="Zhang X.E."/>
            <person name="Zhang X."/>
            <person name="Deng J.Y."/>
        </authorList>
    </citation>
    <scope>ACETYLATION AT LYS-214 AND LYS-281</scope>
    <scope>DEACETYLATION BY COBB</scope>
    <scope>FUNCTION</scope>
    <scope>CATALYTIC ACTIVITY</scope>
    <scope>MUTAGENESIS OF GLY-127; LYS-214 AND LYS-281</scope>
</reference>
<proteinExistence type="evidence at protein level"/>
<feature type="chain" id="PRO_0000107915" description="Arylamine N-acetyltransferase">
    <location>
        <begin position="1"/>
        <end position="281"/>
    </location>
</feature>
<feature type="active site" description="Acyl-thioester intermediate" evidence="1">
    <location>
        <position position="69"/>
    </location>
</feature>
<feature type="active site" evidence="1">
    <location>
        <position position="107"/>
    </location>
</feature>
<feature type="active site" evidence="1">
    <location>
        <position position="122"/>
    </location>
</feature>
<feature type="modified residue" description="N6-acetyllysine" evidence="4">
    <location>
        <position position="214"/>
    </location>
</feature>
<feature type="modified residue" description="N6-acetyllysine" evidence="4">
    <location>
        <position position="281"/>
    </location>
</feature>
<feature type="mutagenesis site" description="No change in activity." evidence="4">
    <original>G</original>
    <variation>A</variation>
    <location>
        <position position="127"/>
    </location>
</feature>
<feature type="mutagenesis site" description="Significant decrease in activity." evidence="4">
    <original>G</original>
    <variation>F</variation>
    <location>
        <position position="127"/>
    </location>
</feature>
<feature type="mutagenesis site" description="Decreases O-acetyltransferase activity." evidence="4">
    <original>K</original>
    <variation>Q</variation>
    <location>
        <position position="214"/>
    </location>
</feature>
<feature type="mutagenesis site" description="Slightly decreases acetylation level. Decreases O- and N-acetyltransferase activities." evidence="4">
    <original>K</original>
    <variation>R</variation>
    <location>
        <position position="214"/>
    </location>
</feature>
<feature type="mutagenesis site" description="Decreases O-acetyltransferase activity." evidence="4">
    <original>K</original>
    <variation>Q</variation>
    <location>
        <position position="281"/>
    </location>
</feature>
<feature type="mutagenesis site" description="Markedly decreases acetylation level. Decreases O- and N-acetyltransferase activities." evidence="4">
    <original>K</original>
    <variation>R</variation>
    <location>
        <position position="281"/>
    </location>
</feature>
<sequence length="281" mass="32275">MTPILNHYFARINWSGAAAVNIDTLRALHLKHNCTIPFENLDVLLPREIQLDNQSPEEKLVIARRGGYCFEQNGVFERVLRELGFNVRSLLGRVVLSNPPALPPRTHRLLLVELEEEKWIADVGFGGQTLTAPIRLVSDLVQTTPHGEYRLLQEGDDWVLQFNHHQHWQSMYRFDLCEQQQSDYVMGNFWSAHWPQSHFRHHLLMCRHLPDGGKLTLTNFHFTHYENGHAVEQRNLPDVASLYAVMQEQFGLGVDDAKHGFTVDELALVMAAFDTHPEAGK</sequence>